<comment type="function">
    <text evidence="2">In complex with MON1, is required for multiple vacuole delivery pathways including the cytoplasm to vacuole transport (Cvt), autophagy, pexophagy and endocytosis. The MON1-CCZ1 complex acts at the fusion of vesicles with the vacuole, through its regulation of the SNARE complex during the coordinated priming and docking stages of fusion, and particularly at the stage of tethering/docking.</text>
</comment>
<comment type="subunit">
    <text evidence="2">Forms a complex with MON1.</text>
</comment>
<comment type="subcellular location">
    <subcellularLocation>
        <location evidence="1">Endosome</location>
        <location evidence="1">Multivesicular body membrane</location>
        <topology evidence="1">Peripheral membrane protein</topology>
    </subcellularLocation>
    <subcellularLocation>
        <location evidence="1">Prevacuolar compartment membrane</location>
        <topology evidence="1">Peripheral membrane protein</topology>
    </subcellularLocation>
    <subcellularLocation>
        <location evidence="1">Vacuole membrane</location>
        <topology evidence="1">Peripheral membrane protein</topology>
    </subcellularLocation>
    <subcellularLocation>
        <location evidence="2">Vesicle</location>
    </subcellularLocation>
</comment>
<comment type="similarity">
    <text evidence="4">Belongs to the CCZ1 family.</text>
</comment>
<organism>
    <name type="scientific">Kluyveromyces lactis (strain ATCC 8585 / CBS 2359 / DSM 70799 / NBRC 1267 / NRRL Y-1140 / WM37)</name>
    <name type="common">Yeast</name>
    <name type="synonym">Candida sphaerica</name>
    <dbReference type="NCBI Taxonomy" id="284590"/>
    <lineage>
        <taxon>Eukaryota</taxon>
        <taxon>Fungi</taxon>
        <taxon>Dikarya</taxon>
        <taxon>Ascomycota</taxon>
        <taxon>Saccharomycotina</taxon>
        <taxon>Saccharomycetes</taxon>
        <taxon>Saccharomycetales</taxon>
        <taxon>Saccharomycetaceae</taxon>
        <taxon>Kluyveromyces</taxon>
    </lineage>
</organism>
<dbReference type="EMBL" id="CR382124">
    <property type="protein sequence ID" value="CAH00559.1"/>
    <property type="molecule type" value="Genomic_DNA"/>
</dbReference>
<dbReference type="RefSeq" id="XP_453463.1">
    <property type="nucleotide sequence ID" value="XM_453463.1"/>
</dbReference>
<dbReference type="FunCoup" id="Q6CRH6">
    <property type="interactions" value="118"/>
</dbReference>
<dbReference type="STRING" id="284590.Q6CRH6"/>
<dbReference type="PaxDb" id="284590-Q6CRH6"/>
<dbReference type="KEGG" id="kla:KLLA0_D08998g"/>
<dbReference type="eggNOG" id="ENOG502QSQV">
    <property type="taxonomic scope" value="Eukaryota"/>
</dbReference>
<dbReference type="HOGENOM" id="CLU_418686_0_0_1"/>
<dbReference type="InParanoid" id="Q6CRH6"/>
<dbReference type="OMA" id="YNCLFWY"/>
<dbReference type="Proteomes" id="UP000000598">
    <property type="component" value="Chromosome D"/>
</dbReference>
<dbReference type="GO" id="GO:0035658">
    <property type="term" value="C:Mon1-Ccz1 complex"/>
    <property type="evidence" value="ECO:0007669"/>
    <property type="project" value="InterPro"/>
</dbReference>
<dbReference type="GO" id="GO:0032585">
    <property type="term" value="C:multivesicular body membrane"/>
    <property type="evidence" value="ECO:0007669"/>
    <property type="project" value="UniProtKB-SubCell"/>
</dbReference>
<dbReference type="GO" id="GO:0005774">
    <property type="term" value="C:vacuolar membrane"/>
    <property type="evidence" value="ECO:0007669"/>
    <property type="project" value="UniProtKB-SubCell"/>
</dbReference>
<dbReference type="GO" id="GO:0006914">
    <property type="term" value="P:autophagy"/>
    <property type="evidence" value="ECO:0007669"/>
    <property type="project" value="UniProtKB-KW"/>
</dbReference>
<dbReference type="GO" id="GO:0015031">
    <property type="term" value="P:protein transport"/>
    <property type="evidence" value="ECO:0007669"/>
    <property type="project" value="UniProtKB-KW"/>
</dbReference>
<dbReference type="GO" id="GO:0016192">
    <property type="term" value="P:vesicle-mediated transport"/>
    <property type="evidence" value="ECO:0007669"/>
    <property type="project" value="InterPro"/>
</dbReference>
<dbReference type="InterPro" id="IPR013176">
    <property type="entry name" value="Ccz1"/>
</dbReference>
<dbReference type="InterPro" id="IPR043987">
    <property type="entry name" value="CCZ1/INTU/HSP4_longin_1"/>
</dbReference>
<dbReference type="PANTHER" id="PTHR13056">
    <property type="entry name" value="VACUOLAR FUSION PROTEIN CCZ1 HOMOLOG-RELATED"/>
    <property type="match status" value="1"/>
</dbReference>
<dbReference type="PANTHER" id="PTHR13056:SF0">
    <property type="entry name" value="VACUOLAR FUSION PROTEIN CCZ1 HOMOLOG-RELATED"/>
    <property type="match status" value="1"/>
</dbReference>
<dbReference type="Pfam" id="PF19031">
    <property type="entry name" value="Intu_longin_1"/>
    <property type="match status" value="1"/>
</dbReference>
<dbReference type="PIRSF" id="PIRSF011668">
    <property type="entry name" value="DUF1712_fun"/>
    <property type="match status" value="1"/>
</dbReference>
<protein>
    <recommendedName>
        <fullName>Vacuolar fusion protein CCZ1</fullName>
    </recommendedName>
</protein>
<name>CCZ1_KLULA</name>
<accession>Q6CRH6</accession>
<keyword id="KW-0072">Autophagy</keyword>
<keyword id="KW-0967">Endosome</keyword>
<keyword id="KW-0472">Membrane</keyword>
<keyword id="KW-0653">Protein transport</keyword>
<keyword id="KW-1185">Reference proteome</keyword>
<keyword id="KW-0813">Transport</keyword>
<keyword id="KW-0926">Vacuole</keyword>
<feature type="chain" id="PRO_0000278850" description="Vacuolar fusion protein CCZ1">
    <location>
        <begin position="1"/>
        <end position="618"/>
    </location>
</feature>
<feature type="region of interest" description="Disordered" evidence="3">
    <location>
        <begin position="490"/>
        <end position="517"/>
    </location>
</feature>
<feature type="compositionally biased region" description="Basic and acidic residues" evidence="3">
    <location>
        <begin position="502"/>
        <end position="515"/>
    </location>
</feature>
<gene>
    <name type="primary">CCZ1</name>
    <name type="ordered locus">KLLA0D08998g</name>
</gene>
<sequence length="618" mass="71655">MSVQFIVLFRDDDDNKDDSCKLLLYHDLTAHMLSTNEKEQKIGIIKGMWRFSNEFSQSNDYCHVELDSYSMLVLEVEPSYYLALGFENTHNSQWPKYKVRLSQCYQFFAMQHGKMQDIEDKTLSGLLNEHFIPFWDEINLIPDYFLMQDINTAIDDKMFPCCQFADALNSISEVKDWQNYLKNNVLLSEENYLNIKDVCVYHLPKNNKNTKEYGFITNFDPQFKSLPTLSNWLVGIDSMYGTVSSHGLAGTMSLTETEQQIELDAEEAHHEQPPNIKTVWDNVTLPITFTMDALKDIGQLTGVSNSLSLFTNMKPSWNLWSSSSENGAGSAKLDDKDEYSWLISPLNPSFLPKVYQMRKFYLQFDDWSQYNILFWKFKDVIVAVIVDPSFKKISEESFLMKLQEELWNGISLFYENTGFEKRQCSFDYTILFKEEGKYYSSIPRWKNGLDESDTALKLVIKGLDETLQFLTNNANRKSSVATVTEVGHDMSLTDHPIPSDPSKGEDGTEKTDKSESSIFSKLNESQLVELNKELMVILGTRSLTVWYKDANTKERMLKLNNGLMVYLLENNRKLVLIIKNWFIDSQQKTKSKRSTDMIESLGKDVSTWWNRIKDHEPL</sequence>
<evidence type="ECO:0000250" key="1"/>
<evidence type="ECO:0000250" key="2">
    <source>
        <dbReference type="UniProtKB" id="P38273"/>
    </source>
</evidence>
<evidence type="ECO:0000256" key="3">
    <source>
        <dbReference type="SAM" id="MobiDB-lite"/>
    </source>
</evidence>
<evidence type="ECO:0000305" key="4"/>
<proteinExistence type="inferred from homology"/>
<reference key="1">
    <citation type="journal article" date="2004" name="Nature">
        <title>Genome evolution in yeasts.</title>
        <authorList>
            <person name="Dujon B."/>
            <person name="Sherman D."/>
            <person name="Fischer G."/>
            <person name="Durrens P."/>
            <person name="Casaregola S."/>
            <person name="Lafontaine I."/>
            <person name="de Montigny J."/>
            <person name="Marck C."/>
            <person name="Neuveglise C."/>
            <person name="Talla E."/>
            <person name="Goffard N."/>
            <person name="Frangeul L."/>
            <person name="Aigle M."/>
            <person name="Anthouard V."/>
            <person name="Babour A."/>
            <person name="Barbe V."/>
            <person name="Barnay S."/>
            <person name="Blanchin S."/>
            <person name="Beckerich J.-M."/>
            <person name="Beyne E."/>
            <person name="Bleykasten C."/>
            <person name="Boisrame A."/>
            <person name="Boyer J."/>
            <person name="Cattolico L."/>
            <person name="Confanioleri F."/>
            <person name="de Daruvar A."/>
            <person name="Despons L."/>
            <person name="Fabre E."/>
            <person name="Fairhead C."/>
            <person name="Ferry-Dumazet H."/>
            <person name="Groppi A."/>
            <person name="Hantraye F."/>
            <person name="Hennequin C."/>
            <person name="Jauniaux N."/>
            <person name="Joyet P."/>
            <person name="Kachouri R."/>
            <person name="Kerrest A."/>
            <person name="Koszul R."/>
            <person name="Lemaire M."/>
            <person name="Lesur I."/>
            <person name="Ma L."/>
            <person name="Muller H."/>
            <person name="Nicaud J.-M."/>
            <person name="Nikolski M."/>
            <person name="Oztas S."/>
            <person name="Ozier-Kalogeropoulos O."/>
            <person name="Pellenz S."/>
            <person name="Potier S."/>
            <person name="Richard G.-F."/>
            <person name="Straub M.-L."/>
            <person name="Suleau A."/>
            <person name="Swennen D."/>
            <person name="Tekaia F."/>
            <person name="Wesolowski-Louvel M."/>
            <person name="Westhof E."/>
            <person name="Wirth B."/>
            <person name="Zeniou-Meyer M."/>
            <person name="Zivanovic Y."/>
            <person name="Bolotin-Fukuhara M."/>
            <person name="Thierry A."/>
            <person name="Bouchier C."/>
            <person name="Caudron B."/>
            <person name="Scarpelli C."/>
            <person name="Gaillardin C."/>
            <person name="Weissenbach J."/>
            <person name="Wincker P."/>
            <person name="Souciet J.-L."/>
        </authorList>
    </citation>
    <scope>NUCLEOTIDE SEQUENCE [LARGE SCALE GENOMIC DNA]</scope>
    <source>
        <strain>ATCC 8585 / CBS 2359 / DSM 70799 / NBRC 1267 / NRRL Y-1140 / WM37</strain>
    </source>
</reference>